<reference key="1">
    <citation type="submission" date="2003-06" db="EMBL/GenBank/DDBJ databases">
        <title>The complete genome sequence of Haemophilus ducreyi.</title>
        <authorList>
            <person name="Munson R.S. Jr."/>
            <person name="Ray W.C."/>
            <person name="Mahairas G."/>
            <person name="Sabo P."/>
            <person name="Mungur R."/>
            <person name="Johnson L."/>
            <person name="Nguyen D."/>
            <person name="Wang J."/>
            <person name="Forst C."/>
            <person name="Hood L."/>
        </authorList>
    </citation>
    <scope>NUCLEOTIDE SEQUENCE [LARGE SCALE GENOMIC DNA]</scope>
    <source>
        <strain>35000HP / ATCC 700724</strain>
    </source>
</reference>
<name>LPXC_HAEDU</name>
<organism>
    <name type="scientific">Haemophilus ducreyi (strain 35000HP / ATCC 700724)</name>
    <dbReference type="NCBI Taxonomy" id="233412"/>
    <lineage>
        <taxon>Bacteria</taxon>
        <taxon>Pseudomonadati</taxon>
        <taxon>Pseudomonadota</taxon>
        <taxon>Gammaproteobacteria</taxon>
        <taxon>Pasteurellales</taxon>
        <taxon>Pasteurellaceae</taxon>
        <taxon>Haemophilus</taxon>
    </lineage>
</organism>
<protein>
    <recommendedName>
        <fullName evidence="1">UDP-3-O-acyl-N-acetylglucosamine deacetylase</fullName>
        <shortName evidence="1">UDP-3-O-acyl-GlcNAc deacetylase</shortName>
        <ecNumber evidence="1">3.5.1.108</ecNumber>
    </recommendedName>
    <alternativeName>
        <fullName evidence="1">UDP-3-O-[R-3-hydroxymyristoyl]-N-acetylglucosamine deacetylase</fullName>
    </alternativeName>
</protein>
<proteinExistence type="inferred from homology"/>
<dbReference type="EC" id="3.5.1.108" evidence="1"/>
<dbReference type="EMBL" id="AE017143">
    <property type="protein sequence ID" value="AAP95715.1"/>
    <property type="molecule type" value="Genomic_DNA"/>
</dbReference>
<dbReference type="RefSeq" id="WP_010944765.1">
    <property type="nucleotide sequence ID" value="NC_002940.2"/>
</dbReference>
<dbReference type="SMR" id="Q7VMY6"/>
<dbReference type="STRING" id="233412.HD_0816"/>
<dbReference type="KEGG" id="hdu:HD_0816"/>
<dbReference type="eggNOG" id="COG0774">
    <property type="taxonomic scope" value="Bacteria"/>
</dbReference>
<dbReference type="HOGENOM" id="CLU_046528_1_0_6"/>
<dbReference type="OrthoDB" id="9802746at2"/>
<dbReference type="UniPathway" id="UPA00359">
    <property type="reaction ID" value="UER00478"/>
</dbReference>
<dbReference type="Proteomes" id="UP000001022">
    <property type="component" value="Chromosome"/>
</dbReference>
<dbReference type="GO" id="GO:0016020">
    <property type="term" value="C:membrane"/>
    <property type="evidence" value="ECO:0007669"/>
    <property type="project" value="GOC"/>
</dbReference>
<dbReference type="GO" id="GO:0046872">
    <property type="term" value="F:metal ion binding"/>
    <property type="evidence" value="ECO:0007669"/>
    <property type="project" value="UniProtKB-KW"/>
</dbReference>
<dbReference type="GO" id="GO:0103117">
    <property type="term" value="F:UDP-3-O-acyl-N-acetylglucosamine deacetylase activity"/>
    <property type="evidence" value="ECO:0007669"/>
    <property type="project" value="UniProtKB-UniRule"/>
</dbReference>
<dbReference type="GO" id="GO:0009245">
    <property type="term" value="P:lipid A biosynthetic process"/>
    <property type="evidence" value="ECO:0007669"/>
    <property type="project" value="UniProtKB-UniRule"/>
</dbReference>
<dbReference type="Gene3D" id="3.30.230.20">
    <property type="entry name" value="lpxc deacetylase, domain 1"/>
    <property type="match status" value="1"/>
</dbReference>
<dbReference type="Gene3D" id="3.30.1700.10">
    <property type="entry name" value="lpxc deacetylase, domain 2"/>
    <property type="match status" value="1"/>
</dbReference>
<dbReference type="HAMAP" id="MF_00388">
    <property type="entry name" value="LpxC"/>
    <property type="match status" value="1"/>
</dbReference>
<dbReference type="InterPro" id="IPR020568">
    <property type="entry name" value="Ribosomal_Su5_D2-typ_SF"/>
</dbReference>
<dbReference type="InterPro" id="IPR004463">
    <property type="entry name" value="UDP-acyl_GlcNac_deAcase"/>
</dbReference>
<dbReference type="InterPro" id="IPR011334">
    <property type="entry name" value="UDP-acyl_GlcNac_deAcase_C"/>
</dbReference>
<dbReference type="InterPro" id="IPR015870">
    <property type="entry name" value="UDP-acyl_N-AcGlcN_deAcase_N"/>
</dbReference>
<dbReference type="NCBIfam" id="TIGR00325">
    <property type="entry name" value="lpxC"/>
    <property type="match status" value="1"/>
</dbReference>
<dbReference type="PANTHER" id="PTHR33694">
    <property type="entry name" value="UDP-3-O-ACYL-N-ACETYLGLUCOSAMINE DEACETYLASE 1, MITOCHONDRIAL-RELATED"/>
    <property type="match status" value="1"/>
</dbReference>
<dbReference type="PANTHER" id="PTHR33694:SF1">
    <property type="entry name" value="UDP-3-O-ACYL-N-ACETYLGLUCOSAMINE DEACETYLASE 1, MITOCHONDRIAL-RELATED"/>
    <property type="match status" value="1"/>
</dbReference>
<dbReference type="Pfam" id="PF03331">
    <property type="entry name" value="LpxC"/>
    <property type="match status" value="1"/>
</dbReference>
<dbReference type="SUPFAM" id="SSF54211">
    <property type="entry name" value="Ribosomal protein S5 domain 2-like"/>
    <property type="match status" value="2"/>
</dbReference>
<gene>
    <name evidence="1" type="primary">lpxC</name>
    <name type="ordered locus">HD_0816</name>
</gene>
<keyword id="KW-0378">Hydrolase</keyword>
<keyword id="KW-0441">Lipid A biosynthesis</keyword>
<keyword id="KW-0444">Lipid biosynthesis</keyword>
<keyword id="KW-0443">Lipid metabolism</keyword>
<keyword id="KW-0479">Metal-binding</keyword>
<keyword id="KW-1185">Reference proteome</keyword>
<keyword id="KW-0862">Zinc</keyword>
<feature type="chain" id="PRO_0000191933" description="UDP-3-O-acyl-N-acetylglucosamine deacetylase">
    <location>
        <begin position="1"/>
        <end position="306"/>
    </location>
</feature>
<feature type="active site" description="Proton donor" evidence="1">
    <location>
        <position position="266"/>
    </location>
</feature>
<feature type="binding site" evidence="1">
    <location>
        <position position="79"/>
    </location>
    <ligand>
        <name>Zn(2+)</name>
        <dbReference type="ChEBI" id="CHEBI:29105"/>
    </ligand>
</feature>
<feature type="binding site" evidence="1">
    <location>
        <position position="239"/>
    </location>
    <ligand>
        <name>Zn(2+)</name>
        <dbReference type="ChEBI" id="CHEBI:29105"/>
    </ligand>
</feature>
<feature type="binding site" evidence="1">
    <location>
        <position position="243"/>
    </location>
    <ligand>
        <name>Zn(2+)</name>
        <dbReference type="ChEBI" id="CHEBI:29105"/>
    </ligand>
</feature>
<accession>Q7VMY6</accession>
<evidence type="ECO:0000255" key="1">
    <source>
        <dbReference type="HAMAP-Rule" id="MF_00388"/>
    </source>
</evidence>
<sequence>MIKQRTLKQATTVTGIGLHSGQKVKLTLRPAPANTGIIYARTDLTPAVYFTADANLVGDTTLCTCMINDDGVRISTVEHLNAAVSALGLDNLIIEVNAPEVPIMDGSSSPFIYLLLDAGIEEQESPKKFIRIKQTVRIEDGDKWAELKPYNNGLKLDFTIEFNHPMISKDVRHFNMELSAKNFIHNISRARTFTFMKDVEYLQSMGLALGGSLDNAIVLDEYRILNEEGLRYKDELVKHKMLDSIGDLFMCGYNILGEFTAYKSGHGLNNKLLRAVLANKNAWEFVTFDDTQQAPQGYQIGEQVFI</sequence>
<comment type="function">
    <text evidence="1">Catalyzes the hydrolysis of UDP-3-O-myristoyl-N-acetylglucosamine to form UDP-3-O-myristoylglucosamine and acetate, the committed step in lipid A biosynthesis.</text>
</comment>
<comment type="catalytic activity">
    <reaction evidence="1">
        <text>a UDP-3-O-[(3R)-3-hydroxyacyl]-N-acetyl-alpha-D-glucosamine + H2O = a UDP-3-O-[(3R)-3-hydroxyacyl]-alpha-D-glucosamine + acetate</text>
        <dbReference type="Rhea" id="RHEA:67816"/>
        <dbReference type="ChEBI" id="CHEBI:15377"/>
        <dbReference type="ChEBI" id="CHEBI:30089"/>
        <dbReference type="ChEBI" id="CHEBI:137740"/>
        <dbReference type="ChEBI" id="CHEBI:173225"/>
        <dbReference type="EC" id="3.5.1.108"/>
    </reaction>
</comment>
<comment type="cofactor">
    <cofactor evidence="1">
        <name>Zn(2+)</name>
        <dbReference type="ChEBI" id="CHEBI:29105"/>
    </cofactor>
</comment>
<comment type="pathway">
    <text evidence="1">Glycolipid biosynthesis; lipid IV(A) biosynthesis; lipid IV(A) from (3R)-3-hydroxytetradecanoyl-[acyl-carrier-protein] and UDP-N-acetyl-alpha-D-glucosamine: step 2/6.</text>
</comment>
<comment type="similarity">
    <text evidence="1">Belongs to the LpxC family.</text>
</comment>